<gene>
    <name type="primary">ygaV</name>
    <name type="ordered locus">b2667</name>
    <name type="ordered locus">JW2642</name>
</gene>
<protein>
    <recommendedName>
        <fullName evidence="6">HTH-type transcriptional regulator YgaV</fullName>
    </recommendedName>
    <alternativeName>
        <fullName evidence="5">Sulfide-responsive transcription factor YgaV</fullName>
    </alternativeName>
</protein>
<sequence length="99" mass="10596">MTELAQLQASAEQAAALLKAMSHPKRLLILCMLSGSPGTSAGELTRITGLSASATSQHLARMRDEGLIDSQRDAQRILYSIKNEAVNAIIATLKNVYCP</sequence>
<evidence type="ECO:0000255" key="1">
    <source>
        <dbReference type="PROSITE-ProRule" id="PRU00340"/>
    </source>
</evidence>
<evidence type="ECO:0000269" key="2">
    <source>
    </source>
</evidence>
<evidence type="ECO:0000269" key="3">
    <source>
    </source>
</evidence>
<evidence type="ECO:0000269" key="4">
    <source>
    </source>
</evidence>
<evidence type="ECO:0000303" key="5">
    <source>
    </source>
</evidence>
<evidence type="ECO:0000305" key="6"/>
<evidence type="ECO:0007744" key="7">
    <source>
        <dbReference type="PDB" id="3CUO"/>
    </source>
</evidence>
<evidence type="ECO:0007829" key="8">
    <source>
        <dbReference type="PDB" id="3CUO"/>
    </source>
</evidence>
<feature type="chain" id="PRO_0000160628" description="HTH-type transcriptional regulator YgaV">
    <location>
        <begin position="1"/>
        <end position="99"/>
    </location>
</feature>
<feature type="domain" description="HTH arsR-type" evidence="1">
    <location>
        <begin position="7"/>
        <end position="99"/>
    </location>
</feature>
<feature type="DNA-binding region" description="H-T-H motif" evidence="1">
    <location>
        <begin position="41"/>
        <end position="64"/>
    </location>
</feature>
<feature type="helix" evidence="8">
    <location>
        <begin position="2"/>
        <end position="7"/>
    </location>
</feature>
<feature type="helix" evidence="8">
    <location>
        <begin position="8"/>
        <end position="10"/>
    </location>
</feature>
<feature type="helix" evidence="8">
    <location>
        <begin position="11"/>
        <end position="21"/>
    </location>
</feature>
<feature type="helix" evidence="8">
    <location>
        <begin position="24"/>
        <end position="33"/>
    </location>
</feature>
<feature type="strand" evidence="8">
    <location>
        <begin position="38"/>
        <end position="40"/>
    </location>
</feature>
<feature type="helix" evidence="8">
    <location>
        <begin position="41"/>
        <end position="48"/>
    </location>
</feature>
<feature type="helix" evidence="8">
    <location>
        <begin position="52"/>
        <end position="64"/>
    </location>
</feature>
<feature type="strand" evidence="8">
    <location>
        <begin position="67"/>
        <end position="72"/>
    </location>
</feature>
<feature type="strand" evidence="8">
    <location>
        <begin position="77"/>
        <end position="81"/>
    </location>
</feature>
<feature type="helix" evidence="8">
    <location>
        <begin position="84"/>
        <end position="97"/>
    </location>
</feature>
<name>YGAV_ECOLI</name>
<comment type="function">
    <text evidence="2 3 4">Transcriptional regulator that regulates large-scale gene expression in response to sulfide (PubMed:40005711). May act as a global regulator responsible for redox homeostasis (PubMed:40005711). It functions as both a repressor and an activator (PubMed:36552568, PubMed:40005711). In the absence of sulfide compounds, it negatively regulates many anaerobic respiratory genes, including formate, fumarate, lactate, nitrate and nitrite reductase genes (PubMed:36552568). In the presence of hydrogen sulfide (H(2)S), YgaV activity is attenuated, leading to the expression of anaerobic respiratory and ROS scavenging genes, which contributes to redox homeostasis, reactive oxygen species (ROS) scavenging and antibiotic tolerance (PubMed:36552568). It responds to H(2)O(2) scavenging and increases antibiotic tolerance under H(2)S-atmospheric conditions (PubMed:36552568). It also negatively regulates its own expression by binding to the ygaVP promoter region (PubMed:18245262, PubMed:36552568). May also be involved in regulatory mechanisms that operate independently of sulfide (PubMed:40005711).</text>
</comment>
<comment type="activity regulation">
    <text evidence="3 4">In the presence of H(2)S, two cysteine residues form an intramolecular tetrasulfide bond, which attenuates the binding of YgaV to DNA (PubMed:36552568). Both unmodified YgaV and sulfide-modified YgaV can probably function as either a repressor or an activator (PubMed:40005711). Binds heme, which may influence the DNA-binding affinity (PubMed:36552568).</text>
</comment>
<comment type="induction">
    <text evidence="2 3">Part of the ygaVP operon, which is repressed by YgaV (PubMed:36552568). The operon can be induced by tributylin (TBT), a toxic chemical used as a biocide and in textiles and wood preservation (PubMed:18245262).</text>
</comment>
<comment type="disruption phenotype">
    <text evidence="3 4">Disruption of the gene affects the expression of many anaerobic and ROS-scavenging genes (PubMed:36552568). The mutant shows higher H(2)O(2) levels and increased antibiotic sensitivity (PubMed:36552568). Loss of the gene induces drastic changes in gene expression profiles under oxygen-limiting and/or sulfide-enriched conditions (PubMed:40005711).</text>
</comment>
<reference key="1">
    <citation type="journal article" date="1997" name="DNA Res.">
        <title>Construction of a contiguous 874-kb sequence of the Escherichia coli-K12 genome corresponding to 50.0-68.8 min on the linkage map and analysis of its sequence features.</title>
        <authorList>
            <person name="Yamamoto Y."/>
            <person name="Aiba H."/>
            <person name="Baba T."/>
            <person name="Hayashi K."/>
            <person name="Inada T."/>
            <person name="Isono K."/>
            <person name="Itoh T."/>
            <person name="Kimura S."/>
            <person name="Kitagawa M."/>
            <person name="Makino K."/>
            <person name="Miki T."/>
            <person name="Mitsuhashi N."/>
            <person name="Mizobuchi K."/>
            <person name="Mori H."/>
            <person name="Nakade S."/>
            <person name="Nakamura Y."/>
            <person name="Nashimoto H."/>
            <person name="Oshima T."/>
            <person name="Oyama S."/>
            <person name="Saito N."/>
            <person name="Sampei G."/>
            <person name="Satoh Y."/>
            <person name="Sivasundaram S."/>
            <person name="Tagami H."/>
            <person name="Takahashi H."/>
            <person name="Takeda J."/>
            <person name="Takemoto K."/>
            <person name="Uehara K."/>
            <person name="Wada C."/>
            <person name="Yamagata S."/>
            <person name="Horiuchi T."/>
        </authorList>
    </citation>
    <scope>NUCLEOTIDE SEQUENCE [LARGE SCALE GENOMIC DNA]</scope>
    <source>
        <strain>K12 / W3110 / ATCC 27325 / DSM 5911</strain>
    </source>
</reference>
<reference key="2">
    <citation type="journal article" date="1997" name="Science">
        <title>The complete genome sequence of Escherichia coli K-12.</title>
        <authorList>
            <person name="Blattner F.R."/>
            <person name="Plunkett G. III"/>
            <person name="Bloch C.A."/>
            <person name="Perna N.T."/>
            <person name="Burland V."/>
            <person name="Riley M."/>
            <person name="Collado-Vides J."/>
            <person name="Glasner J.D."/>
            <person name="Rode C.K."/>
            <person name="Mayhew G.F."/>
            <person name="Gregor J."/>
            <person name="Davis N.W."/>
            <person name="Kirkpatrick H.A."/>
            <person name="Goeden M.A."/>
            <person name="Rose D.J."/>
            <person name="Mau B."/>
            <person name="Shao Y."/>
        </authorList>
    </citation>
    <scope>NUCLEOTIDE SEQUENCE [LARGE SCALE GENOMIC DNA]</scope>
    <source>
        <strain>K12 / MG1655 / ATCC 47076</strain>
    </source>
</reference>
<reference key="3">
    <citation type="journal article" date="2006" name="Mol. Syst. Biol.">
        <title>Highly accurate genome sequences of Escherichia coli K-12 strains MG1655 and W3110.</title>
        <authorList>
            <person name="Hayashi K."/>
            <person name="Morooka N."/>
            <person name="Yamamoto Y."/>
            <person name="Fujita K."/>
            <person name="Isono K."/>
            <person name="Choi S."/>
            <person name="Ohtsubo E."/>
            <person name="Baba T."/>
            <person name="Wanner B.L."/>
            <person name="Mori H."/>
            <person name="Horiuchi T."/>
        </authorList>
    </citation>
    <scope>NUCLEOTIDE SEQUENCE [LARGE SCALE GENOMIC DNA]</scope>
    <source>
        <strain>K12 / W3110 / ATCC 27325 / DSM 5911</strain>
    </source>
</reference>
<reference key="4">
    <citation type="journal article" date="2008" name="Appl. Environ. Microbiol.">
        <title>The ygaVP genes of Escherichia coli form a tributyltin-inducible operon.</title>
        <authorList>
            <person name="Gueune H."/>
            <person name="Durand M.-J."/>
            <person name="Thouand G."/>
            <person name="DuBow M.S."/>
        </authorList>
    </citation>
    <scope>FUNCTION</scope>
    <scope>INDUCTION</scope>
</reference>
<reference key="5">
    <citation type="journal article" date="2022" name="Antioxidants">
        <title>The Sulfide-Responsive SqrR/BigR Homologous Regulator YgaV of Escherichia coli Controls Expression of Anaerobic Respiratory Genes and Antibiotic Tolerance.</title>
        <authorList>
            <person name="Balasubramanian R."/>
            <person name="Hori K."/>
            <person name="Shimizu T."/>
            <person name="Kasamatsu S."/>
            <person name="Okamura K."/>
            <person name="Tanaka K."/>
            <person name="Ihara H."/>
            <person name="Masuda S."/>
        </authorList>
    </citation>
    <scope>FUNCTION</scope>
    <scope>DNA-BINDING</scope>
    <scope>HEME-BINDING</scope>
    <scope>ACTIVITY REGULATION</scope>
    <scope>INDUCTION</scope>
    <scope>DISRUPTION PHENOTYPE</scope>
    <source>
        <strain>K12 / BW25113</strain>
    </source>
</reference>
<reference key="6">
    <citation type="journal article" date="2025" name="Microorganisms">
        <title>Sulfide-Responsive Transcription Control in Escherichia coli.</title>
        <authorList>
            <person name="Hori K."/>
            <person name="Balasubramanian R."/>
            <person name="Masuda S."/>
        </authorList>
    </citation>
    <scope>FUNCTION</scope>
    <scope>ACTIVITY REGULATION</scope>
    <scope>DISRUPTION PHENOTYPE</scope>
    <source>
        <strain>K12 / BW25113</strain>
    </source>
</reference>
<reference evidence="7" key="7">
    <citation type="submission" date="2008-06" db="PDB data bank">
        <title>The crystal structure of the predicted DNA-binding transcriptional regulator from E. coli.</title>
        <authorList>
            <consortium name="Midwest center for structural genomics (MCSG)"/>
        </authorList>
    </citation>
    <scope>X-RAY CRYSTALLOGRAPHY (2.0 ANGSTROMS)</scope>
</reference>
<organism>
    <name type="scientific">Escherichia coli (strain K12)</name>
    <dbReference type="NCBI Taxonomy" id="83333"/>
    <lineage>
        <taxon>Bacteria</taxon>
        <taxon>Pseudomonadati</taxon>
        <taxon>Pseudomonadota</taxon>
        <taxon>Gammaproteobacteria</taxon>
        <taxon>Enterobacterales</taxon>
        <taxon>Enterobacteriaceae</taxon>
        <taxon>Escherichia</taxon>
    </lineage>
</organism>
<accession>P77295</accession>
<keyword id="KW-0002">3D-structure</keyword>
<keyword id="KW-0010">Activator</keyword>
<keyword id="KW-0238">DNA-binding</keyword>
<keyword id="KW-1185">Reference proteome</keyword>
<keyword id="KW-0678">Repressor</keyword>
<keyword id="KW-0346">Stress response</keyword>
<keyword id="KW-0804">Transcription</keyword>
<keyword id="KW-0805">Transcription regulation</keyword>
<dbReference type="EMBL" id="U00096">
    <property type="protein sequence ID" value="AAC75714.1"/>
    <property type="molecule type" value="Genomic_DNA"/>
</dbReference>
<dbReference type="EMBL" id="AP009048">
    <property type="protein sequence ID" value="BAA16530.1"/>
    <property type="molecule type" value="Genomic_DNA"/>
</dbReference>
<dbReference type="PIR" id="D65046">
    <property type="entry name" value="D65046"/>
</dbReference>
<dbReference type="RefSeq" id="NP_417153.1">
    <property type="nucleotide sequence ID" value="NC_000913.3"/>
</dbReference>
<dbReference type="RefSeq" id="WP_000137280.1">
    <property type="nucleotide sequence ID" value="NZ_STEB01000042.1"/>
</dbReference>
<dbReference type="PDB" id="3CUO">
    <property type="method" value="X-ray"/>
    <property type="resolution" value="2.00 A"/>
    <property type="chains" value="A/B/C/D=1-99"/>
</dbReference>
<dbReference type="PDBsum" id="3CUO"/>
<dbReference type="SMR" id="P77295"/>
<dbReference type="BioGRID" id="4259220">
    <property type="interactions" value="162"/>
</dbReference>
<dbReference type="BioGRID" id="851470">
    <property type="interactions" value="4"/>
</dbReference>
<dbReference type="FunCoup" id="P77295">
    <property type="interactions" value="166"/>
</dbReference>
<dbReference type="IntAct" id="P77295">
    <property type="interactions" value="10"/>
</dbReference>
<dbReference type="STRING" id="511145.b2667"/>
<dbReference type="jPOST" id="P77295"/>
<dbReference type="PaxDb" id="511145-b2667"/>
<dbReference type="EnsemblBacteria" id="AAC75714">
    <property type="protein sequence ID" value="AAC75714"/>
    <property type="gene ID" value="b2667"/>
</dbReference>
<dbReference type="GeneID" id="947136"/>
<dbReference type="KEGG" id="ecj:JW2642"/>
<dbReference type="KEGG" id="eco:b2667"/>
<dbReference type="KEGG" id="ecoc:C3026_14700"/>
<dbReference type="PATRIC" id="fig|511145.12.peg.2759"/>
<dbReference type="EchoBASE" id="EB3296"/>
<dbReference type="eggNOG" id="COG0640">
    <property type="taxonomic scope" value="Bacteria"/>
</dbReference>
<dbReference type="HOGENOM" id="CLU_097806_6_4_6"/>
<dbReference type="InParanoid" id="P77295"/>
<dbReference type="OMA" id="CILANEE"/>
<dbReference type="OrthoDB" id="9796124at2"/>
<dbReference type="PhylomeDB" id="P77295"/>
<dbReference type="BioCyc" id="EcoCyc:G7397-MONOMER"/>
<dbReference type="EvolutionaryTrace" id="P77295"/>
<dbReference type="PRO" id="PR:P77295"/>
<dbReference type="Proteomes" id="UP000000625">
    <property type="component" value="Chromosome"/>
</dbReference>
<dbReference type="GO" id="GO:0003677">
    <property type="term" value="F:DNA binding"/>
    <property type="evidence" value="ECO:0007669"/>
    <property type="project" value="UniProtKB-KW"/>
</dbReference>
<dbReference type="GO" id="GO:0003700">
    <property type="term" value="F:DNA-binding transcription factor activity"/>
    <property type="evidence" value="ECO:0007669"/>
    <property type="project" value="InterPro"/>
</dbReference>
<dbReference type="GO" id="GO:0006355">
    <property type="term" value="P:regulation of DNA-templated transcription"/>
    <property type="evidence" value="ECO:0000318"/>
    <property type="project" value="GO_Central"/>
</dbReference>
<dbReference type="CDD" id="cd00090">
    <property type="entry name" value="HTH_ARSR"/>
    <property type="match status" value="1"/>
</dbReference>
<dbReference type="Gene3D" id="1.10.10.10">
    <property type="entry name" value="Winged helix-like DNA-binding domain superfamily/Winged helix DNA-binding domain"/>
    <property type="match status" value="1"/>
</dbReference>
<dbReference type="InterPro" id="IPR011991">
    <property type="entry name" value="ArsR-like_HTH"/>
</dbReference>
<dbReference type="InterPro" id="IPR001845">
    <property type="entry name" value="HTH_ArsR_DNA-bd_dom"/>
</dbReference>
<dbReference type="InterPro" id="IPR051011">
    <property type="entry name" value="Metal_resp_trans_reg"/>
</dbReference>
<dbReference type="InterPro" id="IPR036388">
    <property type="entry name" value="WH-like_DNA-bd_sf"/>
</dbReference>
<dbReference type="InterPro" id="IPR036390">
    <property type="entry name" value="WH_DNA-bd_sf"/>
</dbReference>
<dbReference type="NCBIfam" id="NF033788">
    <property type="entry name" value="HTH_metalloreg"/>
    <property type="match status" value="1"/>
</dbReference>
<dbReference type="PANTHER" id="PTHR43132">
    <property type="entry name" value="ARSENICAL RESISTANCE OPERON REPRESSOR ARSR-RELATED"/>
    <property type="match status" value="1"/>
</dbReference>
<dbReference type="PANTHER" id="PTHR43132:SF2">
    <property type="entry name" value="ARSENICAL RESISTANCE OPERON REPRESSOR ARSR-RELATED"/>
    <property type="match status" value="1"/>
</dbReference>
<dbReference type="Pfam" id="PF01022">
    <property type="entry name" value="HTH_5"/>
    <property type="match status" value="1"/>
</dbReference>
<dbReference type="PRINTS" id="PR00778">
    <property type="entry name" value="HTHARSR"/>
</dbReference>
<dbReference type="SMART" id="SM00418">
    <property type="entry name" value="HTH_ARSR"/>
    <property type="match status" value="1"/>
</dbReference>
<dbReference type="SUPFAM" id="SSF46785">
    <property type="entry name" value="Winged helix' DNA-binding domain"/>
    <property type="match status" value="1"/>
</dbReference>
<dbReference type="PROSITE" id="PS50987">
    <property type="entry name" value="HTH_ARSR_2"/>
    <property type="match status" value="1"/>
</dbReference>
<proteinExistence type="evidence at protein level"/>